<keyword id="KW-0125">Carotenoid biosynthesis</keyword>
<keyword id="KW-0150">Chloroplast</keyword>
<keyword id="KW-0957">Chromoplast</keyword>
<keyword id="KW-0274">FAD</keyword>
<keyword id="KW-0285">Flavoprotein</keyword>
<keyword id="KW-0472">Membrane</keyword>
<keyword id="KW-0560">Oxidoreductase</keyword>
<keyword id="KW-0934">Plastid</keyword>
<keyword id="KW-1185">Reference proteome</keyword>
<keyword id="KW-0809">Transit peptide</keyword>
<gene>
    <name type="primary">PDS</name>
</gene>
<proteinExistence type="evidence at protein level"/>
<protein>
    <recommendedName>
        <fullName evidence="5">15-cis-phytoene desaturase, chloroplastic/chromoplastic</fullName>
        <ecNumber evidence="4">1.3.5.5</ecNumber>
    </recommendedName>
    <alternativeName>
        <fullName evidence="5">Phytoene dehydrogenase</fullName>
    </alternativeName>
    <alternativeName>
        <fullName evidence="5">Phytoene desaturase</fullName>
    </alternativeName>
</protein>
<evidence type="ECO:0000250" key="1">
    <source>
        <dbReference type="UniProtKB" id="A2XDA1"/>
    </source>
</evidence>
<evidence type="ECO:0000250" key="2">
    <source>
        <dbReference type="UniProtKB" id="Q40406"/>
    </source>
</evidence>
<evidence type="ECO:0000255" key="3"/>
<evidence type="ECO:0000269" key="4">
    <source>
    </source>
</evidence>
<evidence type="ECO:0000305" key="5"/>
<reference key="1">
    <citation type="journal article" date="1992" name="Proc. Natl. Acad. Sci. U.S.A.">
        <title>A single polypeptide catalyzing the conversion of phytoene to zeta-carotene is transcriptionally regulated during tomato fruit ripening.</title>
        <authorList>
            <person name="Pecker I."/>
            <person name="Chamovitz D."/>
            <person name="Hirschberg J."/>
        </authorList>
    </citation>
    <scope>NUCLEOTIDE SEQUENCE [MRNA]</scope>
    <scope>FUNCTION</scope>
    <scope>CATALYTIC ACTIVITY</scope>
    <scope>DEVELOPMENTAL STAGE</scope>
</reference>
<reference key="2">
    <citation type="journal article" date="1993" name="Plant Cell">
        <title>Regulation of carotenoid biosynthesis during tomato development.</title>
        <authorList>
            <person name="Bartley G.E."/>
            <person name="Scolnik P.A."/>
            <person name="Giuliano G."/>
        </authorList>
    </citation>
    <scope>NUCLEOTIDE SEQUENCE [MRNA]</scope>
    <scope>DEVELOPMENTAL STAGE</scope>
    <source>
        <strain>cv. Ailsa Craig</strain>
        <tissue>Fruit</tissue>
    </source>
</reference>
<reference key="3">
    <citation type="journal article" date="1994" name="Plant Mol. Biol.">
        <title>Cloning and characterization of the gene for phytoene desaturase (Pds) from tomato (Lycopersicon esculentum).</title>
        <authorList>
            <person name="Mann V."/>
            <person name="Pecker I."/>
            <person name="Hirschberg J."/>
        </authorList>
    </citation>
    <scope>NUCLEOTIDE SEQUENCE [GENOMIC DNA]</scope>
</reference>
<reference key="4">
    <citation type="journal article" date="1994" name="Plant Physiol.">
        <title>Sequence of the phytoene desaturase locus of tomato.</title>
        <authorList>
            <person name="Aracri B."/>
            <person name="Bartley G.E."/>
            <person name="Scolnik P.A."/>
            <person name="Giuliano G."/>
        </authorList>
    </citation>
    <scope>NUCLEOTIDE SEQUENCE [GENOMIC DNA]</scope>
    <source>
        <strain>cv. Ailsa Craig</strain>
    </source>
</reference>
<sequence length="583" mass="64885">MPQIGLVSAVNLRVQGSSAYLWSSRSSSLGTESRDGCLQRNSLCFAGSESMGHKLKIRTPHATTRRLVKDLGPLKVVCIDYPRPELDNTVNYLEAAFLSSTFRASPRPTKPLEIVIAGAGLGGLSTAKYLADAGHKPILLEARDVLGGKVAAWKDDDGDWYETGLHIFFGAYPNIQNLFGELGINDRLQWKEHSMIFAMPSKPGEFSRFDFSEALPAPLNGILAILKNNEMLTWPEKVKFAIGLLPAMLGGQSYVEAQDGISVKDWMRKQGVPDRVTDEVFIAMSKALNFINPDELSMQCILIALNRFLQEKHGSKMAFLDGNPPERLCMPIVEHIESKGGQVRLNSRIKKIELNEDGSVKSFILSDGSAIEGDAFVFAAPVDIFKLLLPEDWKEIPYFQKLEKLVGVPVINVHIWFDRKLKNTYDHLLFSRSSLLSVYADMSVTCKEYYNPNQSMLELVFAPAEEWISRSDSEIIDATMKELATLFPDEISADQSKAKILKYHVVKTPRSVYKTVPGCEPCRPLQRSPIEGFYLAGDYTKQKYLASMEGAVLSGKLCAQAIVQDYELLVGRSQKKLSEASVV</sequence>
<name>PDS_SOLLC</name>
<accession>P28554</accession>
<dbReference type="EC" id="1.3.5.5" evidence="4"/>
<dbReference type="EMBL" id="X59948">
    <property type="protein sequence ID" value="CAA42573.1"/>
    <property type="molecule type" value="mRNA"/>
</dbReference>
<dbReference type="EMBL" id="M88683">
    <property type="protein sequence ID" value="AAA68865.1"/>
    <property type="molecule type" value="mRNA"/>
</dbReference>
<dbReference type="EMBL" id="X71023">
    <property type="protein sequence ID" value="CAB59726.1"/>
    <property type="molecule type" value="Genomic_DNA"/>
</dbReference>
<dbReference type="EMBL" id="X78271">
    <property type="protein sequence ID" value="CAA55078.1"/>
    <property type="molecule type" value="Genomic_DNA"/>
</dbReference>
<dbReference type="PIR" id="A45381">
    <property type="entry name" value="A45381"/>
</dbReference>
<dbReference type="RefSeq" id="NP_001234095.1">
    <property type="nucleotide sequence ID" value="NM_001247166.2"/>
</dbReference>
<dbReference type="RefSeq" id="XP_010318414.1">
    <property type="nucleotide sequence ID" value="XM_010320112.3"/>
</dbReference>
<dbReference type="RefSeq" id="XP_019068139.1">
    <property type="nucleotide sequence ID" value="XM_019212594.1"/>
</dbReference>
<dbReference type="RefSeq" id="XP_069150944.1">
    <property type="nucleotide sequence ID" value="XM_069294843.1"/>
</dbReference>
<dbReference type="RefSeq" id="XP_069150945.1">
    <property type="nucleotide sequence ID" value="XM_069294844.1"/>
</dbReference>
<dbReference type="RefSeq" id="XP_069150946.1">
    <property type="nucleotide sequence ID" value="XM_069294845.1"/>
</dbReference>
<dbReference type="SMR" id="P28554"/>
<dbReference type="FunCoup" id="P28554">
    <property type="interactions" value="1049"/>
</dbReference>
<dbReference type="STRING" id="4081.P28554"/>
<dbReference type="PaxDb" id="4081-Solyc03g123760.2.1"/>
<dbReference type="EnsemblPlants" id="Solyc03g123760.3.1">
    <property type="protein sequence ID" value="Solyc03g123760.3.1"/>
    <property type="gene ID" value="Solyc03g123760.3"/>
</dbReference>
<dbReference type="GeneID" id="544073"/>
<dbReference type="Gramene" id="Solyc03g123760.3.1">
    <property type="protein sequence ID" value="Solyc03g123760.3.1"/>
    <property type="gene ID" value="Solyc03g123760.3"/>
</dbReference>
<dbReference type="KEGG" id="sly:544073"/>
<dbReference type="eggNOG" id="KOG0029">
    <property type="taxonomic scope" value="Eukaryota"/>
</dbReference>
<dbReference type="HOGENOM" id="CLU_022687_1_0_1"/>
<dbReference type="InParanoid" id="P28554"/>
<dbReference type="OMA" id="HSMIFNQ"/>
<dbReference type="OrthoDB" id="5046242at2759"/>
<dbReference type="PhylomeDB" id="P28554"/>
<dbReference type="BRENDA" id="1.3.5.5">
    <property type="organism ID" value="3101"/>
</dbReference>
<dbReference type="UniPathway" id="UPA00803"/>
<dbReference type="Proteomes" id="UP000004994">
    <property type="component" value="Chromosome 3"/>
</dbReference>
<dbReference type="ExpressionAtlas" id="P28554">
    <property type="expression patterns" value="baseline and differential"/>
</dbReference>
<dbReference type="GO" id="GO:0009507">
    <property type="term" value="C:chloroplast"/>
    <property type="evidence" value="ECO:0000250"/>
    <property type="project" value="UniProtKB"/>
</dbReference>
<dbReference type="GO" id="GO:0009509">
    <property type="term" value="C:chromoplast"/>
    <property type="evidence" value="ECO:0000250"/>
    <property type="project" value="UniProtKB"/>
</dbReference>
<dbReference type="GO" id="GO:0016020">
    <property type="term" value="C:membrane"/>
    <property type="evidence" value="ECO:0007669"/>
    <property type="project" value="UniProtKB-SubCell"/>
</dbReference>
<dbReference type="GO" id="GO:0016166">
    <property type="term" value="F:phytoene dehydrogenase activity"/>
    <property type="evidence" value="ECO:0000314"/>
    <property type="project" value="UniProtKB"/>
</dbReference>
<dbReference type="GO" id="GO:0016120">
    <property type="term" value="P:carotene biosynthetic process"/>
    <property type="evidence" value="ECO:0000314"/>
    <property type="project" value="UniProtKB"/>
</dbReference>
<dbReference type="GO" id="GO:0016117">
    <property type="term" value="P:carotenoid biosynthetic process"/>
    <property type="evidence" value="ECO:0000318"/>
    <property type="project" value="GO_Central"/>
</dbReference>
<dbReference type="FunFam" id="3.50.50.60:FF:000091">
    <property type="entry name" value="15-cis-phytoene desaturase, chloroplastic/chromoplastic"/>
    <property type="match status" value="1"/>
</dbReference>
<dbReference type="Gene3D" id="3.50.50.60">
    <property type="entry name" value="FAD/NAD(P)-binding domain"/>
    <property type="match status" value="1"/>
</dbReference>
<dbReference type="InterPro" id="IPR002937">
    <property type="entry name" value="Amino_oxidase"/>
</dbReference>
<dbReference type="InterPro" id="IPR036188">
    <property type="entry name" value="FAD/NAD-bd_sf"/>
</dbReference>
<dbReference type="InterPro" id="IPR014102">
    <property type="entry name" value="Phytoene_desaturase"/>
</dbReference>
<dbReference type="InterPro" id="IPR050464">
    <property type="entry name" value="Zeta_carotene_desat/Oxidored"/>
</dbReference>
<dbReference type="NCBIfam" id="TIGR02731">
    <property type="entry name" value="phytoene_desat"/>
    <property type="match status" value="1"/>
</dbReference>
<dbReference type="PANTHER" id="PTHR42923:SF45">
    <property type="entry name" value="15-CIS-PHYTOENE DESATURASE, CHLOROPLASTIC_CHROMOPLASTIC"/>
    <property type="match status" value="1"/>
</dbReference>
<dbReference type="PANTHER" id="PTHR42923">
    <property type="entry name" value="PROTOPORPHYRINOGEN OXIDASE"/>
    <property type="match status" value="1"/>
</dbReference>
<dbReference type="Pfam" id="PF01593">
    <property type="entry name" value="Amino_oxidase"/>
    <property type="match status" value="1"/>
</dbReference>
<dbReference type="SUPFAM" id="SSF51905">
    <property type="entry name" value="FAD/NAD(P)-binding domain"/>
    <property type="match status" value="1"/>
</dbReference>
<organism>
    <name type="scientific">Solanum lycopersicum</name>
    <name type="common">Tomato</name>
    <name type="synonym">Lycopersicon esculentum</name>
    <dbReference type="NCBI Taxonomy" id="4081"/>
    <lineage>
        <taxon>Eukaryota</taxon>
        <taxon>Viridiplantae</taxon>
        <taxon>Streptophyta</taxon>
        <taxon>Embryophyta</taxon>
        <taxon>Tracheophyta</taxon>
        <taxon>Spermatophyta</taxon>
        <taxon>Magnoliopsida</taxon>
        <taxon>eudicotyledons</taxon>
        <taxon>Gunneridae</taxon>
        <taxon>Pentapetalae</taxon>
        <taxon>asterids</taxon>
        <taxon>lamiids</taxon>
        <taxon>Solanales</taxon>
        <taxon>Solanaceae</taxon>
        <taxon>Solanoideae</taxon>
        <taxon>Solaneae</taxon>
        <taxon>Solanum</taxon>
        <taxon>Solanum subgen. Lycopersicon</taxon>
    </lineage>
</organism>
<feature type="transit peptide" description="Chloroplast and chromoplast" evidence="3">
    <location>
        <begin position="1"/>
        <end position="111"/>
    </location>
</feature>
<feature type="chain" id="PRO_0000006324" description="15-cis-phytoene desaturase, chloroplastic/chromoplastic">
    <location>
        <begin position="112"/>
        <end position="583"/>
    </location>
</feature>
<feature type="binding site" evidence="3">
    <location>
        <begin position="118"/>
        <end position="134"/>
    </location>
    <ligand>
        <name>FAD</name>
        <dbReference type="ChEBI" id="CHEBI:57692"/>
    </ligand>
</feature>
<feature type="binding site" evidence="1">
    <location>
        <begin position="141"/>
        <end position="142"/>
    </location>
    <ligand>
        <name>FAD</name>
        <dbReference type="ChEBI" id="CHEBI:57692"/>
    </ligand>
</feature>
<feature type="binding site" evidence="1">
    <location>
        <position position="149"/>
    </location>
    <ligand>
        <name>FAD</name>
        <dbReference type="ChEBI" id="CHEBI:57692"/>
    </ligand>
</feature>
<feature type="binding site" evidence="1">
    <location>
        <begin position="166"/>
        <end position="167"/>
    </location>
    <ligand>
        <name>FAD</name>
        <dbReference type="ChEBI" id="CHEBI:57692"/>
    </ligand>
</feature>
<feature type="binding site" evidence="1">
    <location>
        <position position="172"/>
    </location>
    <ligand>
        <name>FAD</name>
        <dbReference type="ChEBI" id="CHEBI:57692"/>
    </ligand>
</feature>
<feature type="binding site" evidence="1">
    <location>
        <position position="307"/>
    </location>
    <ligand>
        <name>substrate</name>
    </ligand>
</feature>
<feature type="binding site" evidence="1">
    <location>
        <position position="349"/>
    </location>
    <ligand>
        <name>FAD</name>
        <dbReference type="ChEBI" id="CHEBI:57692"/>
    </ligand>
</feature>
<feature type="binding site" evidence="1">
    <location>
        <position position="538"/>
    </location>
    <ligand>
        <name>FAD</name>
        <dbReference type="ChEBI" id="CHEBI:57692"/>
    </ligand>
</feature>
<feature type="binding site" evidence="1">
    <location>
        <position position="546"/>
    </location>
    <ligand>
        <name>substrate</name>
    </ligand>
</feature>
<feature type="binding site" evidence="1">
    <location>
        <position position="548"/>
    </location>
    <ligand>
        <name>FAD</name>
        <dbReference type="ChEBI" id="CHEBI:57692"/>
    </ligand>
</feature>
<feature type="sequence conflict" description="In Ref. 2." evidence="5" ref="2">
    <original>T</original>
    <variation>A</variation>
    <location>
        <position position="508"/>
    </location>
</feature>
<comment type="function">
    <text evidence="4">Converts phytoene into zeta-carotene via the intermediary of phytofluene by the symmetrical introduction of two double bonds at the C-11 and C-11' positions of phytoene with a concomitant isomerization of two neighboring double bonds at the C9 and C9' positions from trans to cis.</text>
</comment>
<comment type="catalytic activity">
    <reaction evidence="4">
        <text>2 a plastoquinone + 15-cis-phytoene = 9,9',15-tri-cis-zeta-carotene + 2 a plastoquinol</text>
        <dbReference type="Rhea" id="RHEA:30287"/>
        <dbReference type="Rhea" id="RHEA-COMP:9561"/>
        <dbReference type="Rhea" id="RHEA-COMP:9562"/>
        <dbReference type="ChEBI" id="CHEBI:17757"/>
        <dbReference type="ChEBI" id="CHEBI:27787"/>
        <dbReference type="ChEBI" id="CHEBI:48717"/>
        <dbReference type="ChEBI" id="CHEBI:62192"/>
        <dbReference type="EC" id="1.3.5.5"/>
    </reaction>
</comment>
<comment type="cofactor">
    <cofactor evidence="1">
        <name>FAD</name>
        <dbReference type="ChEBI" id="CHEBI:57692"/>
    </cofactor>
</comment>
<comment type="pathway">
    <text>Carotenoid biosynthesis; lycopene biosynthesis.</text>
</comment>
<comment type="subunit">
    <text evidence="1">Homotetramer.</text>
</comment>
<comment type="subcellular location">
    <subcellularLocation>
        <location evidence="2">Plastid</location>
        <location evidence="2">Chloroplast</location>
    </subcellularLocation>
    <subcellularLocation>
        <location evidence="2">Plastid</location>
        <location evidence="2">Chromoplast</location>
    </subcellularLocation>
    <subcellularLocation>
        <location evidence="1">Membrane</location>
        <topology evidence="1">Peripheral membrane protein</topology>
    </subcellularLocation>
</comment>
<comment type="developmental stage">
    <text>Ripening fruit.</text>
</comment>
<comment type="similarity">
    <text evidence="5">Belongs to the carotenoid/retinoid oxidoreductase family.</text>
</comment>